<protein>
    <recommendedName>
        <fullName evidence="9">High light-inducible protein HliD</fullName>
    </recommendedName>
    <alternativeName>
        <fullName evidence="9">Small Cab-like protein ScpE</fullName>
    </alternativeName>
</protein>
<feature type="initiator methionine" description="Removed" evidence="8">
    <location>
        <position position="1"/>
    </location>
</feature>
<feature type="chain" id="PRO_0000459050" description="High light-inducible protein HliD">
    <location>
        <begin position="2"/>
        <end position="57"/>
    </location>
</feature>
<feature type="transmembrane region" description="Helical" evidence="16">
    <location>
        <begin position="25"/>
        <end position="46"/>
    </location>
</feature>
<feature type="short sequence motif" description="Chlorophyll-binding motif" evidence="13">
    <location>
        <begin position="25"/>
        <end position="30"/>
    </location>
</feature>
<proteinExistence type="evidence at protein level"/>
<reference evidence="17" key="1">
    <citation type="journal article" date="1996" name="DNA Res.">
        <title>Sequence analysis of the genome of the unicellular cyanobacterium Synechocystis sp. strain PCC6803. II. Sequence determination of the entire genome and assignment of potential protein-coding regions.</title>
        <authorList>
            <person name="Kaneko T."/>
            <person name="Sato S."/>
            <person name="Kotani H."/>
            <person name="Tanaka A."/>
            <person name="Asamizu E."/>
            <person name="Nakamura Y."/>
            <person name="Miyajima N."/>
            <person name="Hirosawa M."/>
            <person name="Sugiura M."/>
            <person name="Sasamoto S."/>
            <person name="Kimura T."/>
            <person name="Hosouchi T."/>
            <person name="Matsuno A."/>
            <person name="Muraki A."/>
            <person name="Nakazaki N."/>
            <person name="Naruo K."/>
            <person name="Okumura S."/>
            <person name="Shimpo S."/>
            <person name="Takeuchi C."/>
            <person name="Wada T."/>
            <person name="Watanabe A."/>
            <person name="Yamada M."/>
            <person name="Yasuda M."/>
            <person name="Tabata S."/>
        </authorList>
    </citation>
    <scope>NUCLEOTIDE SEQUENCE [LARGE SCALE GENOMIC DNA]</scope>
    <source>
        <strain>ATCC 27184 / PCC 6803 / Kazusa</strain>
    </source>
</reference>
<reference key="2">
    <citation type="journal article" date="2015" name="Nat. Chem. Biol.">
        <title>Mechanism of photoprotection in the cyanobacterial ancestor of plant antenna proteins.</title>
        <authorList>
            <person name="Staleva H."/>
            <person name="Komenda J."/>
            <person name="Shukla M.K."/>
            <person name="Slouf V."/>
            <person name="Kana R."/>
            <person name="Polivka T."/>
            <person name="Sobotka R."/>
        </authorList>
    </citation>
    <scope>PROTEIN SEQUENCE OF 2-26</scope>
    <scope>FUNCTION</scope>
    <scope>CHLOROPHYLL A BINDING</scope>
    <scope>BETA-CAROTENOID BINDING</scope>
    <scope>SUBUNIT</scope>
    <source>
        <strain>ATCC 27184 / PCC 6803 / Kazusa</strain>
    </source>
</reference>
<reference key="3">
    <citation type="journal article" date="1999" name="Biochemistry">
        <title>A cyanobacterial gene family coding for single-helix proteins resembling part of the light-harvesting proteins from higher plants.</title>
        <authorList>
            <person name="Funk C."/>
            <person name="Vermaas W."/>
        </authorList>
    </citation>
    <scope>INDUCTION</scope>
    <source>
        <strain>ATCC 27184 / PCC 6803 / Kazusa</strain>
    </source>
</reference>
<reference key="4">
    <citation type="journal article" date="2001" name="J. Biol. Chem.">
        <title>The high light-inducible polypeptides in Synechocystis PCC6803. Expression and function in high light.</title>
        <authorList>
            <person name="He Q."/>
            <person name="Dolganov N."/>
            <person name="Bjorkman O."/>
            <person name="Grossman A.R."/>
        </authorList>
    </citation>
    <scope>SUBCELLULAR LOCATION</scope>
    <scope>INDUCTION BY HIGH LIGHT</scope>
    <scope>DISRUPTION PHENOTYPE</scope>
    <source>
        <strain>ATCC 27184 / PCC 6803 / Kazusa</strain>
    </source>
</reference>
<reference key="5">
    <citation type="journal article" date="2002" name="Plant Mol. Biol.">
        <title>Small Cab-like proteins regulating tetrapyrrole biosynthesis in the cyanobacterium Synechocystis sp. PCC 6803.</title>
        <authorList>
            <person name="Xu H."/>
            <person name="Vavilin D."/>
            <person name="Funk C."/>
            <person name="Vermaas W."/>
        </authorList>
    </citation>
    <scope>POSSIBLE FUNCTION IN TETRAPYRROLE SYNTHESIS</scope>
    <scope>DISRUPTION PHENOTYPE</scope>
    <source>
        <strain>ATCC 27184 / PCC 6803 / Kazusa</strain>
    </source>
</reference>
<reference key="6">
    <citation type="journal article" date="2004" name="J. Biol. Chem.">
        <title>Multiple deletions of small Cab-like proteins in the cyanobacterium Synechocystis sp. PCC 6803: consequences for pigment biosynthesis and accumulation.</title>
        <authorList>
            <person name="Xu H."/>
            <person name="Vavilin D."/>
            <person name="Funk C."/>
            <person name="Vermaas W."/>
        </authorList>
    </citation>
    <scope>FUNCTION</scope>
    <source>
        <strain>ATCC 27184 / PCC 6803 / Kazusa</strain>
    </source>
</reference>
<reference key="7">
    <citation type="journal article" date="2007" name="J. Biol. Chem.">
        <title>Localization of the small CAB-like proteins in photosystem II.</title>
        <authorList>
            <person name="Yao D."/>
            <person name="Kieselbach T."/>
            <person name="Komenda J."/>
            <person name="Promnares K."/>
            <person name="Prieto M.A."/>
            <person name="Tichy M."/>
            <person name="Vermaas W."/>
            <person name="Funk C."/>
        </authorList>
    </citation>
    <scope>SUBCELLULAR LOCATION</scope>
    <scope>INDUCTION BY HIGH LIGHT</scope>
    <source>
        <strain>ATCC 27184 / PCC 6803 / Kazusa</strain>
    </source>
</reference>
<reference key="8">
    <citation type="journal article" date="2008" name="Photosyn. Res.">
        <title>The small CAB-like proteins of Synechocystis sp. PCC 6803 bind chlorophyll. In vitro pigment reconstitution studies on one-helix light-harvesting-like proteins.</title>
        <authorList>
            <person name="Storm P."/>
            <person name="Hernandez-Prieto M.A."/>
            <person name="Eggink L.L."/>
            <person name="Hoober J.K."/>
            <person name="Funk C."/>
        </authorList>
    </citation>
    <scope>POSSIBLE PIGMENT-BINDING</scope>
    <scope>MOTIF</scope>
    <scope>DISRUPTION PHENOTYPE</scope>
    <source>
        <strain>ATCC 27184 / PCC 6803 / Kazusa</strain>
    </source>
</reference>
<reference key="9">
    <citation type="journal article" date="2012" name="J. Biol. Chem.">
        <title>Photosystem II component lifetimes in the cyanobacterium Synechocystis sp. strain PCC 6803: small Cab-like proteins stabilize biosynthesis intermediates and affect early steps in chlorophyll synthesis.</title>
        <authorList>
            <person name="Yao D.C.I."/>
            <person name="Brune D.C."/>
            <person name="Vavilin D."/>
            <person name="Vermaas W.F.J."/>
        </authorList>
    </citation>
    <scope>POSSIBLE FUNCTION IN AMINOLEVULINIC ACID SYNTHESIS</scope>
    <scope>POSSIBLE FUNCTION IN PSII ASSEMBLY</scope>
    <scope>DISRUPTION PHENOTYPE</scope>
    <source>
        <strain>ATCC 27184 / PCC 6803 / Kazusa</strain>
    </source>
</reference>
<reference key="10">
    <citation type="journal article" date="2014" name="Plant Cell">
        <title>Discovery of a chlorophyll binding protein complex involved in the early steps of photosystem II assembly in Synechocystis.</title>
        <authorList>
            <person name="Knoppova J."/>
            <person name="Sobotka R."/>
            <person name="Tichy M."/>
            <person name="Yu J."/>
            <person name="Konik P."/>
            <person name="Halada P."/>
            <person name="Nixon P.J."/>
            <person name="Komenda J."/>
        </authorList>
    </citation>
    <scope>FUNCTION</scope>
    <scope>SUBUNIT</scope>
    <scope>SUBCELLULAR LOCATION</scope>
    <scope>DISRUPTION PHENOTYPE</scope>
    <source>
        <strain>ATCC 27184 / PCC 6803 / Kazusa</strain>
    </source>
</reference>
<reference key="11">
    <citation type="journal article" date="2018" name="Photosyn. Res.">
        <title>Binding of pigments to the cyanobacterial high-light-inducible protein HliC.</title>
        <authorList>
            <person name="Shukla M.K."/>
            <person name="Llansola-Portoles M.J."/>
            <person name="Tichy M."/>
            <person name="Pascal A.A."/>
            <person name="Robert B."/>
            <person name="Sobotka R."/>
        </authorList>
    </citation>
    <scope>POSSIBLE TOPOLOGY</scope>
    <source>
        <strain>ATCC 27184 / PCC 6803 / Kazusa</strain>
    </source>
</reference>
<accession>P72932</accession>
<gene>
    <name type="primary">hliD</name>
    <name evidence="17" type="synonym">hliA</name>
    <name evidence="9" type="synonym">scpE</name>
    <name evidence="17" type="ordered locus">ssr1789</name>
</gene>
<organism>
    <name type="scientific">Synechocystis sp. (strain ATCC 27184 / PCC 6803 / Kazusa)</name>
    <dbReference type="NCBI Taxonomy" id="1111708"/>
    <lineage>
        <taxon>Bacteria</taxon>
        <taxon>Bacillati</taxon>
        <taxon>Cyanobacteriota</taxon>
        <taxon>Cyanophyceae</taxon>
        <taxon>Synechococcales</taxon>
        <taxon>Merismopediaceae</taxon>
        <taxon>Synechocystis</taxon>
    </lineage>
</organism>
<name>HLID_SYNY3</name>
<dbReference type="EMBL" id="BA000022">
    <property type="protein sequence ID" value="BAA16949.1"/>
    <property type="molecule type" value="Genomic_DNA"/>
</dbReference>
<dbReference type="PIR" id="S74798">
    <property type="entry name" value="S74798"/>
</dbReference>
<dbReference type="SMR" id="P72932"/>
<dbReference type="STRING" id="1148.gene:10497809"/>
<dbReference type="PaxDb" id="1148-1652023"/>
<dbReference type="EnsemblBacteria" id="BAA16949">
    <property type="protein sequence ID" value="BAA16949"/>
    <property type="gene ID" value="BAA16949"/>
</dbReference>
<dbReference type="KEGG" id="syn:ssr1789"/>
<dbReference type="eggNOG" id="ENOG5032Z0N">
    <property type="taxonomic scope" value="Bacteria"/>
</dbReference>
<dbReference type="InParanoid" id="P72932"/>
<dbReference type="PhylomeDB" id="P72932"/>
<dbReference type="Proteomes" id="UP000001425">
    <property type="component" value="Chromosome"/>
</dbReference>
<dbReference type="GO" id="GO:0009523">
    <property type="term" value="C:photosystem II"/>
    <property type="evidence" value="ECO:0007669"/>
    <property type="project" value="UniProtKB-KW"/>
</dbReference>
<dbReference type="GO" id="GO:0031676">
    <property type="term" value="C:plasma membrane-derived thylakoid membrane"/>
    <property type="evidence" value="ECO:0007669"/>
    <property type="project" value="UniProtKB-SubCell"/>
</dbReference>
<dbReference type="GO" id="GO:0016168">
    <property type="term" value="F:chlorophyll binding"/>
    <property type="evidence" value="ECO:0000314"/>
    <property type="project" value="UniProtKB"/>
</dbReference>
<dbReference type="GO" id="GO:0031409">
    <property type="term" value="F:pigment binding"/>
    <property type="evidence" value="ECO:0000314"/>
    <property type="project" value="UniProtKB"/>
</dbReference>
<dbReference type="GO" id="GO:1990066">
    <property type="term" value="P:energy quenching"/>
    <property type="evidence" value="ECO:0000314"/>
    <property type="project" value="UniProtKB"/>
</dbReference>
<dbReference type="GO" id="GO:0010117">
    <property type="term" value="P:photoprotection"/>
    <property type="evidence" value="ECO:0000314"/>
    <property type="project" value="UniProtKB"/>
</dbReference>
<dbReference type="GO" id="GO:0015979">
    <property type="term" value="P:photosynthesis"/>
    <property type="evidence" value="ECO:0007669"/>
    <property type="project" value="UniProtKB-KW"/>
</dbReference>
<dbReference type="InterPro" id="IPR022796">
    <property type="entry name" value="Chloroa_b-bind"/>
</dbReference>
<dbReference type="Pfam" id="PF00504">
    <property type="entry name" value="Chloroa_b-bind"/>
    <property type="match status" value="1"/>
</dbReference>
<dbReference type="SUPFAM" id="SSF103511">
    <property type="entry name" value="Chlorophyll a-b binding protein"/>
    <property type="match status" value="1"/>
</dbReference>
<evidence type="ECO:0000269" key="1">
    <source>
    </source>
</evidence>
<evidence type="ECO:0000269" key="2">
    <source>
    </source>
</evidence>
<evidence type="ECO:0000269" key="3">
    <source>
    </source>
</evidence>
<evidence type="ECO:0000269" key="4">
    <source>
    </source>
</evidence>
<evidence type="ECO:0000269" key="5">
    <source>
    </source>
</evidence>
<evidence type="ECO:0000269" key="6">
    <source>
    </source>
</evidence>
<evidence type="ECO:0000269" key="7">
    <source>
    </source>
</evidence>
<evidence type="ECO:0000269" key="8">
    <source>
    </source>
</evidence>
<evidence type="ECO:0000303" key="9">
    <source>
    </source>
</evidence>
<evidence type="ECO:0000305" key="10"/>
<evidence type="ECO:0000305" key="11">
    <source>
    </source>
</evidence>
<evidence type="ECO:0000305" key="12">
    <source>
    </source>
</evidence>
<evidence type="ECO:0000305" key="13">
    <source>
    </source>
</evidence>
<evidence type="ECO:0000305" key="14">
    <source>
    </source>
</evidence>
<evidence type="ECO:0000305" key="15">
    <source>
    </source>
</evidence>
<evidence type="ECO:0000305" key="16">
    <source>
    </source>
</evidence>
<evidence type="ECO:0000312" key="17">
    <source>
        <dbReference type="EMBL" id="BAA16949.1"/>
    </source>
</evidence>
<comment type="function">
    <text evidence="7 8 12 13">Involved in photosystem II (PSII) assembly and/or repair under high light stress (PubMed:24681620). Required for binding of chlorophyll and carotenoids by the Ycf39-Hlip complex. The Ycf39-Hlip complex binds D1 at an early stage of PSII assembly along with Ycf48, ribosomes and ChlG, the last enzyme in chlorophyll biosynthesis; it may be involved in chlorophyll reuse and delivery to D1 in the initial stages of PSII assembly (PubMed:24681620). Binds chlorophyll a and beta-carotenoid in a 3:1 stoichiometry in the presence and absence of Yfc39; in the Ycf39-HliC-HliD complex, HliD binds all the pigment. The Ycf39-Hlip complex efficiently quenches chlorophyll fluorescence, contributing to photoprotection (PubMed:25706339). Deletion of 4 to 5 members of the Hlip family suggests the proteins are involved in regulation of chlorophyll biosynthesis, in stabilization of chlorophyll-binding proteins and/or in reuse of chlorophylls, and may regulate tetrapyrrole biosynthesis (Probable). Might bind chlorophyll and/or carotenoids in association with HliC (called the ScpBE pair) (Probable).</text>
</comment>
<comment type="function">
    <text evidence="11 14">The Hlips might regulate tetrapyrrole biosynthesis, maybe at the level of aminolevulinic acid synthesis and probably stabilize PSII assembly intermediates (PubMed:11999371, PubMed:22090028).</text>
</comment>
<comment type="subunit">
    <text evidence="2 4 7 8 15">Probably forms dimers which bind 6 chlorophyll a and 2 beta-carotenoid molecules (Probable). Cofractionates in an approximately 50 kDa fraction of the thylakoid membrane with HliC (PubMed:11024039). Does not associate with mature PSII (PubMed:17105726). Purified in several chlorophyll- and carotenoid-containing complexes, including photosystem II (PSII) assembly intermediate complex RCII* (iD1, D1, D2, PsbE, PsbF, PsbI, Ycf39, Ycf48, HliC and HliD) and the Ycf39-Hlip complex (Ycf39, HliC, HliD and pigments) (PubMed:24681620, PubMed:25706339).</text>
</comment>
<comment type="subcellular location">
    <subcellularLocation>
        <location evidence="2 4">Cellular thylakoid membrane</location>
        <topology evidence="16">Single-pass membrane protein</topology>
    </subcellularLocation>
    <text evidence="4">Not detected in cell inner or outer membranes.</text>
</comment>
<comment type="induction">
    <text evidence="1 2 4">Transcription moderately up-regulated in low light (5 umol photons/m(2)/s) or heterotrophic growth, strongly induced in the absence of photosystem I (PSI), probably a monocistronic operon (PubMed:10413515). Expressed at very low levels during growth under normal light (40 umol photons/m(2)/s), induced under high light (500 umol photons/m(2)/s for 6 hours) with maximal expression by 6-9 hours and decreasing after, and after growth at 4 degrees Celsius for 6 hours (at protein level). Upon return to normal light protein expression is stable for 3 hours, then decreases (PubMed:11024039). Expressed at high light (500 umol photons/m(2)/s) and at high levels in PSI or PSI-PSII deletions (at protein level) (PubMed:17105726).</text>
</comment>
<comment type="disruption phenotype">
    <text evidence="2 3 5 6 7">No visible growth effect of the single mutant; double hliC-hliD deletions are out-competed by wild-type in high light (500 umol photons/m(2)/s). Quadruple hliA-hliB-hliC-hliD deletions die rapidly in high light but grow normally in normal light (40 umol photons/m(2)/s). Quadruple mutants are sensitive to norflurazon (PubMed:11024039). In an hliD-PSI-less mutant phycobilin, protochlorophyllide and protoheme levels are reduced (PubMed:11999371). A single gene deletion red-shifts the chlorophyll/carotenoid ratio (PubMed:18836846). In a quintuple hliA-hliB-hliC-hliD-hemH deletion chlorophyll half-life decreases 2-fold while the half-life of PSII proteins does not change; photosystem II assembly intermediate RC47(1) is missing (RC47(1) is PSII monomer without CP43). De novo chlorophyll synthesis is very slow (PubMed:22090028). In a single deletion, significant reduction in RCII* abundance, decreased HliC protein, Ycf39 does not bind pigments (PubMed:24681620).</text>
</comment>
<comment type="similarity">
    <text evidence="10">Belongs to the Hlip family.</text>
</comment>
<keyword id="KW-0903">Direct protein sequencing</keyword>
<keyword id="KW-0472">Membrane</keyword>
<keyword id="KW-0602">Photosynthesis</keyword>
<keyword id="KW-0604">Photosystem II</keyword>
<keyword id="KW-0608">Pigment</keyword>
<keyword id="KW-1185">Reference proteome</keyword>
<keyword id="KW-0346">Stress response</keyword>
<keyword id="KW-0793">Thylakoid</keyword>
<keyword id="KW-0812">Transmembrane</keyword>
<keyword id="KW-1133">Transmembrane helix</keyword>
<sequence>MSEELQPNQTPVQEDPKFGFNNYAEKLNGRAAMVGFLLILVIEYFTNQGVLAWLGLR</sequence>